<comment type="function">
    <text evidence="1">RNaseP catalyzes the removal of the 5'-leader sequence from pre-tRNA to produce the mature 5'-terminus. It can also cleave other RNA substrates such as 4.5S RNA. The protein component plays an auxiliary but essential role in vivo by binding to the 5'-leader sequence and broadening the substrate specificity of the ribozyme.</text>
</comment>
<comment type="catalytic activity">
    <reaction evidence="1">
        <text>Endonucleolytic cleavage of RNA, removing 5'-extranucleotides from tRNA precursor.</text>
        <dbReference type="EC" id="3.1.26.5"/>
    </reaction>
</comment>
<comment type="subunit">
    <text evidence="1">Consists of a catalytic RNA component (M1 or rnpB) and a protein subunit.</text>
</comment>
<comment type="similarity">
    <text evidence="1">Belongs to the RnpA family.</text>
</comment>
<name>RNPA_COREF</name>
<dbReference type="EC" id="3.1.26.5" evidence="1"/>
<dbReference type="EMBL" id="BA000035">
    <property type="protein sequence ID" value="BAC19756.1"/>
    <property type="molecule type" value="Genomic_DNA"/>
</dbReference>
<dbReference type="RefSeq" id="WP_011076159.1">
    <property type="nucleotide sequence ID" value="NC_004369.1"/>
</dbReference>
<dbReference type="SMR" id="Q8FSU8"/>
<dbReference type="STRING" id="196164.gene:10743396"/>
<dbReference type="KEGG" id="cef:CE2946"/>
<dbReference type="eggNOG" id="COG0594">
    <property type="taxonomic scope" value="Bacteria"/>
</dbReference>
<dbReference type="HOGENOM" id="CLU_117179_4_1_11"/>
<dbReference type="OrthoDB" id="196964at2"/>
<dbReference type="Proteomes" id="UP000001409">
    <property type="component" value="Chromosome"/>
</dbReference>
<dbReference type="GO" id="GO:0030677">
    <property type="term" value="C:ribonuclease P complex"/>
    <property type="evidence" value="ECO:0007669"/>
    <property type="project" value="TreeGrafter"/>
</dbReference>
<dbReference type="GO" id="GO:0042781">
    <property type="term" value="F:3'-tRNA processing endoribonuclease activity"/>
    <property type="evidence" value="ECO:0007669"/>
    <property type="project" value="TreeGrafter"/>
</dbReference>
<dbReference type="GO" id="GO:0004526">
    <property type="term" value="F:ribonuclease P activity"/>
    <property type="evidence" value="ECO:0007669"/>
    <property type="project" value="UniProtKB-UniRule"/>
</dbReference>
<dbReference type="GO" id="GO:0000049">
    <property type="term" value="F:tRNA binding"/>
    <property type="evidence" value="ECO:0007669"/>
    <property type="project" value="UniProtKB-UniRule"/>
</dbReference>
<dbReference type="GO" id="GO:0001682">
    <property type="term" value="P:tRNA 5'-leader removal"/>
    <property type="evidence" value="ECO:0007669"/>
    <property type="project" value="UniProtKB-UniRule"/>
</dbReference>
<dbReference type="Gene3D" id="3.30.230.10">
    <property type="match status" value="1"/>
</dbReference>
<dbReference type="HAMAP" id="MF_00227">
    <property type="entry name" value="RNase_P"/>
    <property type="match status" value="1"/>
</dbReference>
<dbReference type="InterPro" id="IPR020568">
    <property type="entry name" value="Ribosomal_Su5_D2-typ_SF"/>
</dbReference>
<dbReference type="InterPro" id="IPR014721">
    <property type="entry name" value="Ribsml_uS5_D2-typ_fold_subgr"/>
</dbReference>
<dbReference type="InterPro" id="IPR000100">
    <property type="entry name" value="RNase_P"/>
</dbReference>
<dbReference type="NCBIfam" id="TIGR00188">
    <property type="entry name" value="rnpA"/>
    <property type="match status" value="1"/>
</dbReference>
<dbReference type="PANTHER" id="PTHR33992">
    <property type="entry name" value="RIBONUCLEASE P PROTEIN COMPONENT"/>
    <property type="match status" value="1"/>
</dbReference>
<dbReference type="PANTHER" id="PTHR33992:SF1">
    <property type="entry name" value="RIBONUCLEASE P PROTEIN COMPONENT"/>
    <property type="match status" value="1"/>
</dbReference>
<dbReference type="Pfam" id="PF00825">
    <property type="entry name" value="Ribonuclease_P"/>
    <property type="match status" value="1"/>
</dbReference>
<dbReference type="SUPFAM" id="SSF54211">
    <property type="entry name" value="Ribosomal protein S5 domain 2-like"/>
    <property type="match status" value="1"/>
</dbReference>
<organism>
    <name type="scientific">Corynebacterium efficiens (strain DSM 44549 / YS-314 / AJ 12310 / JCM 11189 / NBRC 100395)</name>
    <dbReference type="NCBI Taxonomy" id="196164"/>
    <lineage>
        <taxon>Bacteria</taxon>
        <taxon>Bacillati</taxon>
        <taxon>Actinomycetota</taxon>
        <taxon>Actinomycetes</taxon>
        <taxon>Mycobacteriales</taxon>
        <taxon>Corynebacteriaceae</taxon>
        <taxon>Corynebacterium</taxon>
    </lineage>
</organism>
<protein>
    <recommendedName>
        <fullName evidence="1">Ribonuclease P protein component</fullName>
        <shortName evidence="1">RNase P protein</shortName>
        <shortName evidence="1">RNaseP protein</shortName>
        <ecNumber evidence="1">3.1.26.5</ecNumber>
    </recommendedName>
    <alternativeName>
        <fullName evidence="1">Protein C5</fullName>
    </alternativeName>
</protein>
<feature type="chain" id="PRO_0000198453" description="Ribonuclease P protein component">
    <location>
        <begin position="1"/>
        <end position="133"/>
    </location>
</feature>
<gene>
    <name evidence="1" type="primary">rnpA</name>
    <name type="ordered locus">CE2946</name>
</gene>
<sequence>MLPAQNKLTSSVQFRTTMRKGRRAGSSTVVVHLWDSAESLDGTGEKGEVASFGGPRFGLIVSKAVGNAVIRHRTSRRLRHVCARIAADSPELLTPTHHVVIRALAGSGQASSQDLERDIRHGLRKAGRVRTDK</sequence>
<evidence type="ECO:0000255" key="1">
    <source>
        <dbReference type="HAMAP-Rule" id="MF_00227"/>
    </source>
</evidence>
<reference key="1">
    <citation type="journal article" date="2003" name="Genome Res.">
        <title>Comparative complete genome sequence analysis of the amino acid replacements responsible for the thermostability of Corynebacterium efficiens.</title>
        <authorList>
            <person name="Nishio Y."/>
            <person name="Nakamura Y."/>
            <person name="Kawarabayasi Y."/>
            <person name="Usuda Y."/>
            <person name="Kimura E."/>
            <person name="Sugimoto S."/>
            <person name="Matsui K."/>
            <person name="Yamagishi A."/>
            <person name="Kikuchi H."/>
            <person name="Ikeo K."/>
            <person name="Gojobori T."/>
        </authorList>
    </citation>
    <scope>NUCLEOTIDE SEQUENCE [LARGE SCALE GENOMIC DNA]</scope>
    <source>
        <strain>DSM 44549 / YS-314 / AJ 12310 / JCM 11189 / NBRC 100395</strain>
    </source>
</reference>
<proteinExistence type="inferred from homology"/>
<accession>Q8FSU8</accession>
<keyword id="KW-0255">Endonuclease</keyword>
<keyword id="KW-0378">Hydrolase</keyword>
<keyword id="KW-0540">Nuclease</keyword>
<keyword id="KW-1185">Reference proteome</keyword>
<keyword id="KW-0694">RNA-binding</keyword>
<keyword id="KW-0819">tRNA processing</keyword>